<dbReference type="EC" id="5.1.1.3" evidence="1"/>
<dbReference type="EMBL" id="CP001217">
    <property type="protein sequence ID" value="ACJ07710.1"/>
    <property type="molecule type" value="Genomic_DNA"/>
</dbReference>
<dbReference type="SMR" id="B6JLD2"/>
<dbReference type="KEGG" id="hpp:HPP12_0556"/>
<dbReference type="HOGENOM" id="CLU_052344_0_2_7"/>
<dbReference type="UniPathway" id="UPA00219"/>
<dbReference type="Proteomes" id="UP000008198">
    <property type="component" value="Chromosome"/>
</dbReference>
<dbReference type="GO" id="GO:0008881">
    <property type="term" value="F:glutamate racemase activity"/>
    <property type="evidence" value="ECO:0007669"/>
    <property type="project" value="UniProtKB-UniRule"/>
</dbReference>
<dbReference type="GO" id="GO:0071555">
    <property type="term" value="P:cell wall organization"/>
    <property type="evidence" value="ECO:0007669"/>
    <property type="project" value="UniProtKB-KW"/>
</dbReference>
<dbReference type="GO" id="GO:0009252">
    <property type="term" value="P:peptidoglycan biosynthetic process"/>
    <property type="evidence" value="ECO:0007669"/>
    <property type="project" value="UniProtKB-UniRule"/>
</dbReference>
<dbReference type="GO" id="GO:0008360">
    <property type="term" value="P:regulation of cell shape"/>
    <property type="evidence" value="ECO:0007669"/>
    <property type="project" value="UniProtKB-KW"/>
</dbReference>
<dbReference type="FunFam" id="3.40.50.1860:FF:000001">
    <property type="entry name" value="Glutamate racemase"/>
    <property type="match status" value="1"/>
</dbReference>
<dbReference type="Gene3D" id="3.40.50.1860">
    <property type="match status" value="2"/>
</dbReference>
<dbReference type="HAMAP" id="MF_00258">
    <property type="entry name" value="Glu_racemase"/>
    <property type="match status" value="1"/>
</dbReference>
<dbReference type="InterPro" id="IPR015942">
    <property type="entry name" value="Asp/Glu/hydantoin_racemase"/>
</dbReference>
<dbReference type="InterPro" id="IPR001920">
    <property type="entry name" value="Asp/Glu_race"/>
</dbReference>
<dbReference type="InterPro" id="IPR018187">
    <property type="entry name" value="Asp/Glu_racemase_AS_1"/>
</dbReference>
<dbReference type="InterPro" id="IPR033134">
    <property type="entry name" value="Asp/Glu_racemase_AS_2"/>
</dbReference>
<dbReference type="InterPro" id="IPR004391">
    <property type="entry name" value="Glu_race"/>
</dbReference>
<dbReference type="NCBIfam" id="TIGR00067">
    <property type="entry name" value="glut_race"/>
    <property type="match status" value="1"/>
</dbReference>
<dbReference type="PANTHER" id="PTHR21198">
    <property type="entry name" value="GLUTAMATE RACEMASE"/>
    <property type="match status" value="1"/>
</dbReference>
<dbReference type="PANTHER" id="PTHR21198:SF2">
    <property type="entry name" value="GLUTAMATE RACEMASE"/>
    <property type="match status" value="1"/>
</dbReference>
<dbReference type="Pfam" id="PF01177">
    <property type="entry name" value="Asp_Glu_race"/>
    <property type="match status" value="1"/>
</dbReference>
<dbReference type="SUPFAM" id="SSF53681">
    <property type="entry name" value="Aspartate/glutamate racemase"/>
    <property type="match status" value="2"/>
</dbReference>
<dbReference type="PROSITE" id="PS00923">
    <property type="entry name" value="ASP_GLU_RACEMASE_1"/>
    <property type="match status" value="1"/>
</dbReference>
<dbReference type="PROSITE" id="PS00924">
    <property type="entry name" value="ASP_GLU_RACEMASE_2"/>
    <property type="match status" value="1"/>
</dbReference>
<sequence length="255" mass="28353">MKIGVFDSGVGGFSVLKSLLKAQLFDEIIYYGDSARVPYGTKDPTTIKQFGLEALDFFKPHQIKLLIVACNTASALALEEMQKHSKIPIVGVIEPSILAIKQQVKDKNAPILVLGTKATIQSNAYDNALKQQGYLNVSHLATSLFVPLIEENILEGELLETCMRYYFTPLKILPEVIILGCTHFPLIAQKIEGYFMGHFALPTPPLLIHSGDAIVGYLQQKYALKKNAHAFPKVEFHASGDVVWLEKQAKEWLKL</sequence>
<gene>
    <name evidence="1" type="primary">murI</name>
    <name type="ordered locus">HPP12_0556</name>
</gene>
<evidence type="ECO:0000255" key="1">
    <source>
        <dbReference type="HAMAP-Rule" id="MF_00258"/>
    </source>
</evidence>
<name>MURI_HELP2</name>
<protein>
    <recommendedName>
        <fullName evidence="1">Glutamate racemase</fullName>
        <ecNumber evidence="1">5.1.1.3</ecNumber>
    </recommendedName>
</protein>
<organism>
    <name type="scientific">Helicobacter pylori (strain P12)</name>
    <dbReference type="NCBI Taxonomy" id="570508"/>
    <lineage>
        <taxon>Bacteria</taxon>
        <taxon>Pseudomonadati</taxon>
        <taxon>Campylobacterota</taxon>
        <taxon>Epsilonproteobacteria</taxon>
        <taxon>Campylobacterales</taxon>
        <taxon>Helicobacteraceae</taxon>
        <taxon>Helicobacter</taxon>
    </lineage>
</organism>
<reference key="1">
    <citation type="submission" date="2008-10" db="EMBL/GenBank/DDBJ databases">
        <title>The complete genome sequence of Helicobacter pylori strain P12.</title>
        <authorList>
            <person name="Fischer W."/>
            <person name="Windhager L."/>
            <person name="Karnholz A."/>
            <person name="Zeiller M."/>
            <person name="Zimmer R."/>
            <person name="Haas R."/>
        </authorList>
    </citation>
    <scope>NUCLEOTIDE SEQUENCE [LARGE SCALE GENOMIC DNA]</scope>
    <source>
        <strain>P12</strain>
    </source>
</reference>
<accession>B6JLD2</accession>
<feature type="chain" id="PRO_1000114046" description="Glutamate racemase">
    <location>
        <begin position="1"/>
        <end position="255"/>
    </location>
</feature>
<feature type="active site" description="Proton donor/acceptor" evidence="1">
    <location>
        <position position="70"/>
    </location>
</feature>
<feature type="active site" description="Proton donor/acceptor" evidence="1">
    <location>
        <position position="181"/>
    </location>
</feature>
<feature type="binding site" evidence="1">
    <location>
        <begin position="7"/>
        <end position="8"/>
    </location>
    <ligand>
        <name>substrate</name>
    </ligand>
</feature>
<feature type="binding site" evidence="1">
    <location>
        <begin position="39"/>
        <end position="40"/>
    </location>
    <ligand>
        <name>substrate</name>
    </ligand>
</feature>
<feature type="binding site" evidence="1">
    <location>
        <begin position="71"/>
        <end position="72"/>
    </location>
    <ligand>
        <name>substrate</name>
    </ligand>
</feature>
<feature type="binding site" evidence="1">
    <location>
        <begin position="182"/>
        <end position="183"/>
    </location>
    <ligand>
        <name>substrate</name>
    </ligand>
</feature>
<comment type="function">
    <text evidence="1">Provides the (R)-glutamate required for cell wall biosynthesis.</text>
</comment>
<comment type="catalytic activity">
    <reaction evidence="1">
        <text>L-glutamate = D-glutamate</text>
        <dbReference type="Rhea" id="RHEA:12813"/>
        <dbReference type="ChEBI" id="CHEBI:29985"/>
        <dbReference type="ChEBI" id="CHEBI:29986"/>
        <dbReference type="EC" id="5.1.1.3"/>
    </reaction>
</comment>
<comment type="pathway">
    <text evidence="1">Cell wall biogenesis; peptidoglycan biosynthesis.</text>
</comment>
<comment type="similarity">
    <text evidence="1">Belongs to the aspartate/glutamate racemases family.</text>
</comment>
<keyword id="KW-0133">Cell shape</keyword>
<keyword id="KW-0961">Cell wall biogenesis/degradation</keyword>
<keyword id="KW-0413">Isomerase</keyword>
<keyword id="KW-0573">Peptidoglycan synthesis</keyword>
<proteinExistence type="inferred from homology"/>